<reference key="1">
    <citation type="journal article" date="2010" name="Genome Biol. Evol.">
        <title>Continuing evolution of Burkholderia mallei through genome reduction and large-scale rearrangements.</title>
        <authorList>
            <person name="Losada L."/>
            <person name="Ronning C.M."/>
            <person name="DeShazer D."/>
            <person name="Woods D."/>
            <person name="Fedorova N."/>
            <person name="Kim H.S."/>
            <person name="Shabalina S.A."/>
            <person name="Pearson T.R."/>
            <person name="Brinkac L."/>
            <person name="Tan P."/>
            <person name="Nandi T."/>
            <person name="Crabtree J."/>
            <person name="Badger J."/>
            <person name="Beckstrom-Sternberg S."/>
            <person name="Saqib M."/>
            <person name="Schutzer S.E."/>
            <person name="Keim P."/>
            <person name="Nierman W.C."/>
        </authorList>
    </citation>
    <scope>NUCLEOTIDE SEQUENCE [LARGE SCALE GENOMIC DNA]</scope>
    <source>
        <strain>SAVP1</strain>
    </source>
</reference>
<feature type="chain" id="PRO_1000001373" description="Holliday junction branch migration complex subunit RuvB">
    <location>
        <begin position="1"/>
        <end position="356"/>
    </location>
</feature>
<feature type="region of interest" description="Large ATPase domain (RuvB-L)" evidence="1">
    <location>
        <begin position="4"/>
        <end position="190"/>
    </location>
</feature>
<feature type="region of interest" description="Small ATPAse domain (RuvB-S)" evidence="1">
    <location>
        <begin position="191"/>
        <end position="261"/>
    </location>
</feature>
<feature type="region of interest" description="Head domain (RuvB-H)" evidence="1">
    <location>
        <begin position="264"/>
        <end position="356"/>
    </location>
</feature>
<feature type="binding site" evidence="1">
    <location>
        <position position="29"/>
    </location>
    <ligand>
        <name>ATP</name>
        <dbReference type="ChEBI" id="CHEBI:30616"/>
    </ligand>
</feature>
<feature type="binding site" evidence="1">
    <location>
        <position position="30"/>
    </location>
    <ligand>
        <name>ATP</name>
        <dbReference type="ChEBI" id="CHEBI:30616"/>
    </ligand>
</feature>
<feature type="binding site" evidence="1">
    <location>
        <position position="71"/>
    </location>
    <ligand>
        <name>ATP</name>
        <dbReference type="ChEBI" id="CHEBI:30616"/>
    </ligand>
</feature>
<feature type="binding site" evidence="1">
    <location>
        <position position="74"/>
    </location>
    <ligand>
        <name>ATP</name>
        <dbReference type="ChEBI" id="CHEBI:30616"/>
    </ligand>
</feature>
<feature type="binding site" evidence="1">
    <location>
        <position position="75"/>
    </location>
    <ligand>
        <name>ATP</name>
        <dbReference type="ChEBI" id="CHEBI:30616"/>
    </ligand>
</feature>
<feature type="binding site" evidence="1">
    <location>
        <position position="75"/>
    </location>
    <ligand>
        <name>Mg(2+)</name>
        <dbReference type="ChEBI" id="CHEBI:18420"/>
    </ligand>
</feature>
<feature type="binding site" evidence="1">
    <location>
        <position position="76"/>
    </location>
    <ligand>
        <name>ATP</name>
        <dbReference type="ChEBI" id="CHEBI:30616"/>
    </ligand>
</feature>
<feature type="binding site" evidence="1">
    <location>
        <begin position="137"/>
        <end position="139"/>
    </location>
    <ligand>
        <name>ATP</name>
        <dbReference type="ChEBI" id="CHEBI:30616"/>
    </ligand>
</feature>
<feature type="binding site" evidence="1">
    <location>
        <position position="180"/>
    </location>
    <ligand>
        <name>ATP</name>
        <dbReference type="ChEBI" id="CHEBI:30616"/>
    </ligand>
</feature>
<feature type="binding site" evidence="1">
    <location>
        <position position="190"/>
    </location>
    <ligand>
        <name>ATP</name>
        <dbReference type="ChEBI" id="CHEBI:30616"/>
    </ligand>
</feature>
<feature type="binding site" evidence="1">
    <location>
        <position position="227"/>
    </location>
    <ligand>
        <name>ATP</name>
        <dbReference type="ChEBI" id="CHEBI:30616"/>
    </ligand>
</feature>
<feature type="binding site" evidence="1">
    <location>
        <position position="300"/>
    </location>
    <ligand>
        <name>DNA</name>
        <dbReference type="ChEBI" id="CHEBI:16991"/>
    </ligand>
</feature>
<feature type="binding site" evidence="1">
    <location>
        <position position="319"/>
    </location>
    <ligand>
        <name>DNA</name>
        <dbReference type="ChEBI" id="CHEBI:16991"/>
    </ligand>
</feature>
<feature type="binding site" evidence="1">
    <location>
        <position position="324"/>
    </location>
    <ligand>
        <name>DNA</name>
        <dbReference type="ChEBI" id="CHEBI:16991"/>
    </ligand>
</feature>
<keyword id="KW-0067">ATP-binding</keyword>
<keyword id="KW-0963">Cytoplasm</keyword>
<keyword id="KW-0227">DNA damage</keyword>
<keyword id="KW-0233">DNA recombination</keyword>
<keyword id="KW-0234">DNA repair</keyword>
<keyword id="KW-0238">DNA-binding</keyword>
<keyword id="KW-0378">Hydrolase</keyword>
<keyword id="KW-0547">Nucleotide-binding</keyword>
<proteinExistence type="inferred from homology"/>
<name>RUVB_BURMS</name>
<evidence type="ECO:0000255" key="1">
    <source>
        <dbReference type="HAMAP-Rule" id="MF_00016"/>
    </source>
</evidence>
<accession>A1V064</accession>
<dbReference type="EC" id="3.6.4.-" evidence="1"/>
<dbReference type="EMBL" id="CP000526">
    <property type="protein sequence ID" value="ABM52225.1"/>
    <property type="molecule type" value="Genomic_DNA"/>
</dbReference>
<dbReference type="RefSeq" id="WP_004194268.1">
    <property type="nucleotide sequence ID" value="NC_008785.1"/>
</dbReference>
<dbReference type="SMR" id="A1V064"/>
<dbReference type="GeneID" id="93061494"/>
<dbReference type="KEGG" id="bmv:BMASAVP1_A0266"/>
<dbReference type="HOGENOM" id="CLU_055599_1_0_4"/>
<dbReference type="GO" id="GO:0005737">
    <property type="term" value="C:cytoplasm"/>
    <property type="evidence" value="ECO:0007669"/>
    <property type="project" value="UniProtKB-SubCell"/>
</dbReference>
<dbReference type="GO" id="GO:0048476">
    <property type="term" value="C:Holliday junction resolvase complex"/>
    <property type="evidence" value="ECO:0007669"/>
    <property type="project" value="UniProtKB-UniRule"/>
</dbReference>
<dbReference type="GO" id="GO:0005524">
    <property type="term" value="F:ATP binding"/>
    <property type="evidence" value="ECO:0007669"/>
    <property type="project" value="UniProtKB-UniRule"/>
</dbReference>
<dbReference type="GO" id="GO:0016887">
    <property type="term" value="F:ATP hydrolysis activity"/>
    <property type="evidence" value="ECO:0007669"/>
    <property type="project" value="InterPro"/>
</dbReference>
<dbReference type="GO" id="GO:0000400">
    <property type="term" value="F:four-way junction DNA binding"/>
    <property type="evidence" value="ECO:0007669"/>
    <property type="project" value="UniProtKB-UniRule"/>
</dbReference>
<dbReference type="GO" id="GO:0009378">
    <property type="term" value="F:four-way junction helicase activity"/>
    <property type="evidence" value="ECO:0007669"/>
    <property type="project" value="InterPro"/>
</dbReference>
<dbReference type="GO" id="GO:0006310">
    <property type="term" value="P:DNA recombination"/>
    <property type="evidence" value="ECO:0007669"/>
    <property type="project" value="UniProtKB-UniRule"/>
</dbReference>
<dbReference type="GO" id="GO:0006281">
    <property type="term" value="P:DNA repair"/>
    <property type="evidence" value="ECO:0007669"/>
    <property type="project" value="UniProtKB-UniRule"/>
</dbReference>
<dbReference type="CDD" id="cd00009">
    <property type="entry name" value="AAA"/>
    <property type="match status" value="1"/>
</dbReference>
<dbReference type="FunFam" id="1.10.10.10:FF:000086">
    <property type="entry name" value="Holliday junction ATP-dependent DNA helicase RuvB"/>
    <property type="match status" value="1"/>
</dbReference>
<dbReference type="FunFam" id="3.40.50.300:FF:000073">
    <property type="entry name" value="Holliday junction ATP-dependent DNA helicase RuvB"/>
    <property type="match status" value="1"/>
</dbReference>
<dbReference type="Gene3D" id="1.10.8.60">
    <property type="match status" value="1"/>
</dbReference>
<dbReference type="Gene3D" id="3.40.50.300">
    <property type="entry name" value="P-loop containing nucleotide triphosphate hydrolases"/>
    <property type="match status" value="1"/>
</dbReference>
<dbReference type="Gene3D" id="1.10.10.10">
    <property type="entry name" value="Winged helix-like DNA-binding domain superfamily/Winged helix DNA-binding domain"/>
    <property type="match status" value="1"/>
</dbReference>
<dbReference type="HAMAP" id="MF_00016">
    <property type="entry name" value="DNA_HJ_migration_RuvB"/>
    <property type="match status" value="1"/>
</dbReference>
<dbReference type="InterPro" id="IPR003593">
    <property type="entry name" value="AAA+_ATPase"/>
</dbReference>
<dbReference type="InterPro" id="IPR041445">
    <property type="entry name" value="AAA_lid_4"/>
</dbReference>
<dbReference type="InterPro" id="IPR004605">
    <property type="entry name" value="DNA_helicase_Holl-junc_RuvB"/>
</dbReference>
<dbReference type="InterPro" id="IPR027417">
    <property type="entry name" value="P-loop_NTPase"/>
</dbReference>
<dbReference type="InterPro" id="IPR008824">
    <property type="entry name" value="RuvB-like_N"/>
</dbReference>
<dbReference type="InterPro" id="IPR008823">
    <property type="entry name" value="RuvB_C"/>
</dbReference>
<dbReference type="InterPro" id="IPR036388">
    <property type="entry name" value="WH-like_DNA-bd_sf"/>
</dbReference>
<dbReference type="InterPro" id="IPR036390">
    <property type="entry name" value="WH_DNA-bd_sf"/>
</dbReference>
<dbReference type="NCBIfam" id="NF000868">
    <property type="entry name" value="PRK00080.1"/>
    <property type="match status" value="1"/>
</dbReference>
<dbReference type="NCBIfam" id="TIGR00635">
    <property type="entry name" value="ruvB"/>
    <property type="match status" value="1"/>
</dbReference>
<dbReference type="PANTHER" id="PTHR42848">
    <property type="match status" value="1"/>
</dbReference>
<dbReference type="PANTHER" id="PTHR42848:SF1">
    <property type="entry name" value="HOLLIDAY JUNCTION BRANCH MIGRATION COMPLEX SUBUNIT RUVB"/>
    <property type="match status" value="1"/>
</dbReference>
<dbReference type="Pfam" id="PF17864">
    <property type="entry name" value="AAA_lid_4"/>
    <property type="match status" value="1"/>
</dbReference>
<dbReference type="Pfam" id="PF05491">
    <property type="entry name" value="RuvB_C"/>
    <property type="match status" value="1"/>
</dbReference>
<dbReference type="Pfam" id="PF05496">
    <property type="entry name" value="RuvB_N"/>
    <property type="match status" value="1"/>
</dbReference>
<dbReference type="SMART" id="SM00382">
    <property type="entry name" value="AAA"/>
    <property type="match status" value="1"/>
</dbReference>
<dbReference type="SUPFAM" id="SSF52540">
    <property type="entry name" value="P-loop containing nucleoside triphosphate hydrolases"/>
    <property type="match status" value="1"/>
</dbReference>
<dbReference type="SUPFAM" id="SSF46785">
    <property type="entry name" value="Winged helix' DNA-binding domain"/>
    <property type="match status" value="1"/>
</dbReference>
<protein>
    <recommendedName>
        <fullName evidence="1">Holliday junction branch migration complex subunit RuvB</fullName>
        <ecNumber evidence="1">3.6.4.-</ecNumber>
    </recommendedName>
</protein>
<organism>
    <name type="scientific">Burkholderia mallei (strain SAVP1)</name>
    <dbReference type="NCBI Taxonomy" id="320388"/>
    <lineage>
        <taxon>Bacteria</taxon>
        <taxon>Pseudomonadati</taxon>
        <taxon>Pseudomonadota</taxon>
        <taxon>Betaproteobacteria</taxon>
        <taxon>Burkholderiales</taxon>
        <taxon>Burkholderiaceae</taxon>
        <taxon>Burkholderia</taxon>
        <taxon>pseudomallei group</taxon>
    </lineage>
</organism>
<sequence length="356" mass="39223">MIETDKLAAERIIAATPASSHEEAFERALRPRQLDEYVGQEKVRDQLEIFIEAAKRRSEALDHVLLFGPPGLGKTTLAHIIAREMGVNLRQTSGPVLERAGDLAALLTNLEANDVLFIDEIHRLSPVVEEILYPALEDYQIDIMIGEGPAARSVKLDLQPFTLVGATTRAGMLTNPLRDRFGIVARLEFYDAEQLSRIVRRSAALLNAQIDPAGALEIAKRSRGTPRIANRLLRRVRDYAEVKADGNITAAVADAALAMLDVDPVGFDLMDRKLLEAILHKFDGGPVGVDNLAAAIGEERDTIEDVLEPYLIQQGFLQRTPRGRVATLLTYRHFGLSAPDAANPVRNLWDTPDAEC</sequence>
<gene>
    <name evidence="1" type="primary">ruvB</name>
    <name type="ordered locus">BMASAVP1_A0266</name>
</gene>
<comment type="function">
    <text evidence="1">The RuvA-RuvB-RuvC complex processes Holliday junction (HJ) DNA during genetic recombination and DNA repair, while the RuvA-RuvB complex plays an important role in the rescue of blocked DNA replication forks via replication fork reversal (RFR). RuvA specifically binds to HJ cruciform DNA, conferring on it an open structure. The RuvB hexamer acts as an ATP-dependent pump, pulling dsDNA into and through the RuvAB complex. RuvB forms 2 homohexamers on either side of HJ DNA bound by 1 or 2 RuvA tetramers; 4 subunits per hexamer contact DNA at a time. Coordinated motions by a converter formed by DNA-disengaged RuvB subunits stimulates ATP hydrolysis and nucleotide exchange. Immobilization of the converter enables RuvB to convert the ATP-contained energy into a lever motion, pulling 2 nucleotides of DNA out of the RuvA tetramer per ATP hydrolyzed, thus driving DNA branch migration. The RuvB motors rotate together with the DNA substrate, which together with the progressing nucleotide cycle form the mechanistic basis for DNA recombination by continuous HJ branch migration. Branch migration allows RuvC to scan DNA until it finds its consensus sequence, where it cleaves and resolves cruciform DNA.</text>
</comment>
<comment type="catalytic activity">
    <reaction evidence="1">
        <text>ATP + H2O = ADP + phosphate + H(+)</text>
        <dbReference type="Rhea" id="RHEA:13065"/>
        <dbReference type="ChEBI" id="CHEBI:15377"/>
        <dbReference type="ChEBI" id="CHEBI:15378"/>
        <dbReference type="ChEBI" id="CHEBI:30616"/>
        <dbReference type="ChEBI" id="CHEBI:43474"/>
        <dbReference type="ChEBI" id="CHEBI:456216"/>
    </reaction>
</comment>
<comment type="subunit">
    <text evidence="1">Homohexamer. Forms an RuvA(8)-RuvB(12)-Holliday junction (HJ) complex. HJ DNA is sandwiched between 2 RuvA tetramers; dsDNA enters through RuvA and exits via RuvB. An RuvB hexamer assembles on each DNA strand where it exits the tetramer. Each RuvB hexamer is contacted by two RuvA subunits (via domain III) on 2 adjacent RuvB subunits; this complex drives branch migration. In the full resolvosome a probable DNA-RuvA(4)-RuvB(12)-RuvC(2) complex forms which resolves the HJ.</text>
</comment>
<comment type="subcellular location">
    <subcellularLocation>
        <location evidence="1">Cytoplasm</location>
    </subcellularLocation>
</comment>
<comment type="domain">
    <text evidence="1">Has 3 domains, the large (RuvB-L) and small ATPase (RuvB-S) domains and the C-terminal head (RuvB-H) domain. The head domain binds DNA, while the ATPase domains jointly bind ATP, ADP or are empty depending on the state of the subunit in the translocation cycle. During a single DNA translocation step the structure of each domain remains the same, but their relative positions change.</text>
</comment>
<comment type="similarity">
    <text evidence="1">Belongs to the RuvB family.</text>
</comment>